<protein>
    <recommendedName>
        <fullName evidence="1">Galactose-6-phosphate isomerase subunit LacB</fullName>
        <ecNumber evidence="1">5.3.1.26</ecNumber>
    </recommendedName>
</protein>
<feature type="chain" id="PRO_0000208140" description="Galactose-6-phosphate isomerase subunit LacB">
    <location>
        <begin position="1"/>
        <end position="171"/>
    </location>
</feature>
<evidence type="ECO:0000255" key="1">
    <source>
        <dbReference type="HAMAP-Rule" id="MF_01556"/>
    </source>
</evidence>
<proteinExistence type="inferred from homology"/>
<dbReference type="EC" id="5.3.1.26" evidence="1"/>
<dbReference type="EMBL" id="BA000017">
    <property type="protein sequence ID" value="BAB58356.1"/>
    <property type="molecule type" value="Genomic_DNA"/>
</dbReference>
<dbReference type="RefSeq" id="WP_000684743.1">
    <property type="nucleotide sequence ID" value="NC_002758.2"/>
</dbReference>
<dbReference type="SMR" id="P65646"/>
<dbReference type="KEGG" id="sav:SAV2194"/>
<dbReference type="HOGENOM" id="CLU_091396_2_0_9"/>
<dbReference type="PhylomeDB" id="P65646"/>
<dbReference type="UniPathway" id="UPA00702">
    <property type="reaction ID" value="UER00714"/>
</dbReference>
<dbReference type="Proteomes" id="UP000002481">
    <property type="component" value="Chromosome"/>
</dbReference>
<dbReference type="GO" id="GO:0050044">
    <property type="term" value="F:galactose-6-phosphate isomerase activity"/>
    <property type="evidence" value="ECO:0007669"/>
    <property type="project" value="UniProtKB-UniRule"/>
</dbReference>
<dbReference type="GO" id="GO:0004751">
    <property type="term" value="F:ribose-5-phosphate isomerase activity"/>
    <property type="evidence" value="ECO:0007669"/>
    <property type="project" value="TreeGrafter"/>
</dbReference>
<dbReference type="GO" id="GO:0019316">
    <property type="term" value="P:D-allose catabolic process"/>
    <property type="evidence" value="ECO:0007669"/>
    <property type="project" value="TreeGrafter"/>
</dbReference>
<dbReference type="GO" id="GO:0019388">
    <property type="term" value="P:galactose catabolic process"/>
    <property type="evidence" value="ECO:0007669"/>
    <property type="project" value="UniProtKB-UniPathway"/>
</dbReference>
<dbReference type="GO" id="GO:0019512">
    <property type="term" value="P:lactose catabolic process via tagatose-6-phosphate"/>
    <property type="evidence" value="ECO:0007669"/>
    <property type="project" value="UniProtKB-UniRule"/>
</dbReference>
<dbReference type="GO" id="GO:0009052">
    <property type="term" value="P:pentose-phosphate shunt, non-oxidative branch"/>
    <property type="evidence" value="ECO:0007669"/>
    <property type="project" value="TreeGrafter"/>
</dbReference>
<dbReference type="Gene3D" id="3.40.1400.10">
    <property type="entry name" value="Sugar-phosphate isomerase, RpiB/LacA/LacB"/>
    <property type="match status" value="1"/>
</dbReference>
<dbReference type="HAMAP" id="MF_01556">
    <property type="entry name" value="LacB"/>
    <property type="match status" value="1"/>
</dbReference>
<dbReference type="InterPro" id="IPR004784">
    <property type="entry name" value="LacB"/>
</dbReference>
<dbReference type="InterPro" id="IPR003500">
    <property type="entry name" value="RpiB_LacA_LacB"/>
</dbReference>
<dbReference type="InterPro" id="IPR036569">
    <property type="entry name" value="RpiB_LacA_LacB_sf"/>
</dbReference>
<dbReference type="NCBIfam" id="TIGR01119">
    <property type="entry name" value="lacB"/>
    <property type="match status" value="1"/>
</dbReference>
<dbReference type="NCBIfam" id="NF004051">
    <property type="entry name" value="PRK05571.1"/>
    <property type="match status" value="1"/>
</dbReference>
<dbReference type="NCBIfam" id="NF006381">
    <property type="entry name" value="PRK08622.1"/>
    <property type="match status" value="1"/>
</dbReference>
<dbReference type="NCBIfam" id="NF009258">
    <property type="entry name" value="PRK12615.1"/>
    <property type="match status" value="1"/>
</dbReference>
<dbReference type="NCBIfam" id="TIGR00689">
    <property type="entry name" value="rpiB_lacA_lacB"/>
    <property type="match status" value="1"/>
</dbReference>
<dbReference type="PANTHER" id="PTHR30345:SF0">
    <property type="entry name" value="DNA DAMAGE-REPAIR_TOLERATION PROTEIN DRT102"/>
    <property type="match status" value="1"/>
</dbReference>
<dbReference type="PANTHER" id="PTHR30345">
    <property type="entry name" value="RIBOSE-5-PHOSPHATE ISOMERASE B"/>
    <property type="match status" value="1"/>
</dbReference>
<dbReference type="Pfam" id="PF02502">
    <property type="entry name" value="LacAB_rpiB"/>
    <property type="match status" value="1"/>
</dbReference>
<dbReference type="PIRSF" id="PIRSF005384">
    <property type="entry name" value="RpiB_LacA_B"/>
    <property type="match status" value="1"/>
</dbReference>
<dbReference type="SUPFAM" id="SSF89623">
    <property type="entry name" value="Ribose/Galactose isomerase RpiB/AlsB"/>
    <property type="match status" value="1"/>
</dbReference>
<name>LACB_STAAM</name>
<comment type="catalytic activity">
    <reaction evidence="1">
        <text>aldehydo-D-galactose 6-phosphate = keto-D-tagatose 6-phosphate</text>
        <dbReference type="Rhea" id="RHEA:13033"/>
        <dbReference type="ChEBI" id="CHEBI:58255"/>
        <dbReference type="ChEBI" id="CHEBI:134283"/>
        <dbReference type="EC" id="5.3.1.26"/>
    </reaction>
</comment>
<comment type="pathway">
    <text evidence="1">Carbohydrate metabolism; D-galactose 6-phosphate degradation; D-tagatose 6-phosphate from D-galactose 6-phosphate: step 1/1.</text>
</comment>
<comment type="subunit">
    <text evidence="1">Heteromultimeric protein consisting of LacA and LacB.</text>
</comment>
<comment type="similarity">
    <text evidence="1">Belongs to the LacAB/RpiB family.</text>
</comment>
<reference key="1">
    <citation type="journal article" date="2001" name="Lancet">
        <title>Whole genome sequencing of meticillin-resistant Staphylococcus aureus.</title>
        <authorList>
            <person name="Kuroda M."/>
            <person name="Ohta T."/>
            <person name="Uchiyama I."/>
            <person name="Baba T."/>
            <person name="Yuzawa H."/>
            <person name="Kobayashi I."/>
            <person name="Cui L."/>
            <person name="Oguchi A."/>
            <person name="Aoki K."/>
            <person name="Nagai Y."/>
            <person name="Lian J.-Q."/>
            <person name="Ito T."/>
            <person name="Kanamori M."/>
            <person name="Matsumaru H."/>
            <person name="Maruyama A."/>
            <person name="Murakami H."/>
            <person name="Hosoyama A."/>
            <person name="Mizutani-Ui Y."/>
            <person name="Takahashi N.K."/>
            <person name="Sawano T."/>
            <person name="Inoue R."/>
            <person name="Kaito C."/>
            <person name="Sekimizu K."/>
            <person name="Hirakawa H."/>
            <person name="Kuhara S."/>
            <person name="Goto S."/>
            <person name="Yabuzaki J."/>
            <person name="Kanehisa M."/>
            <person name="Yamashita A."/>
            <person name="Oshima K."/>
            <person name="Furuya K."/>
            <person name="Yoshino C."/>
            <person name="Shiba T."/>
            <person name="Hattori M."/>
            <person name="Ogasawara N."/>
            <person name="Hayashi H."/>
            <person name="Hiramatsu K."/>
        </authorList>
    </citation>
    <scope>NUCLEOTIDE SEQUENCE [LARGE SCALE GENOMIC DNA]</scope>
    <source>
        <strain>Mu50 / ATCC 700699</strain>
    </source>
</reference>
<sequence length="171" mass="18925">MKIALGCDHIVTDTKMRVSEFLKSKGHEVIDVGTYDFTRTHYPIFGKKVGEQVVSGNADLGVCICGTGVGINNAVNKVPGVRSALVRDMTSALYAKEELNANVIGFGGRIIGELLMCDIIDAFINAEYKATEENKKLIAKIKHLETSNADQADPHFFDEFLEKWDRGEYHD</sequence>
<gene>
    <name evidence="1" type="primary">lacB</name>
    <name type="ordered locus">SAV2194</name>
</gene>
<accession>P65646</accession>
<accession>Q99S75</accession>
<organism>
    <name type="scientific">Staphylococcus aureus (strain Mu50 / ATCC 700699)</name>
    <dbReference type="NCBI Taxonomy" id="158878"/>
    <lineage>
        <taxon>Bacteria</taxon>
        <taxon>Bacillati</taxon>
        <taxon>Bacillota</taxon>
        <taxon>Bacilli</taxon>
        <taxon>Bacillales</taxon>
        <taxon>Staphylococcaceae</taxon>
        <taxon>Staphylococcus</taxon>
    </lineage>
</organism>
<keyword id="KW-0413">Isomerase</keyword>
<keyword id="KW-0423">Lactose metabolism</keyword>